<proteinExistence type="inferred from homology"/>
<protein>
    <recommendedName>
        <fullName evidence="1">Large ribosomal subunit protein uL5</fullName>
    </recommendedName>
    <alternativeName>
        <fullName evidence="2">50S ribosomal protein L5</fullName>
    </alternativeName>
</protein>
<reference key="1">
    <citation type="journal article" date="2005" name="Science">
        <title>Genome streamlining in a cosmopolitan oceanic bacterium.</title>
        <authorList>
            <person name="Giovannoni S.J."/>
            <person name="Tripp H.J."/>
            <person name="Givan S."/>
            <person name="Podar M."/>
            <person name="Vergin K.L."/>
            <person name="Baptista D."/>
            <person name="Bibbs L."/>
            <person name="Eads J."/>
            <person name="Richardson T.H."/>
            <person name="Noordewier M."/>
            <person name="Rappe M.S."/>
            <person name="Short J.M."/>
            <person name="Carrington J.C."/>
            <person name="Mathur E.J."/>
        </authorList>
    </citation>
    <scope>NUCLEOTIDE SEQUENCE [LARGE SCALE GENOMIC DNA]</scope>
    <source>
        <strain>HTCC1062</strain>
    </source>
</reference>
<feature type="chain" id="PRO_0000243035" description="Large ribosomal subunit protein uL5">
    <location>
        <begin position="1"/>
        <end position="184"/>
    </location>
</feature>
<dbReference type="EMBL" id="CP000084">
    <property type="protein sequence ID" value="AAZ21908.1"/>
    <property type="molecule type" value="Genomic_DNA"/>
</dbReference>
<dbReference type="RefSeq" id="WP_011282153.1">
    <property type="nucleotide sequence ID" value="NC_007205.1"/>
</dbReference>
<dbReference type="SMR" id="Q4FLN0"/>
<dbReference type="STRING" id="335992.SAR11_1105"/>
<dbReference type="GeneID" id="66295594"/>
<dbReference type="KEGG" id="pub:SAR11_1105"/>
<dbReference type="eggNOG" id="COG0094">
    <property type="taxonomic scope" value="Bacteria"/>
</dbReference>
<dbReference type="HOGENOM" id="CLU_061015_2_1_5"/>
<dbReference type="OrthoDB" id="9806626at2"/>
<dbReference type="Proteomes" id="UP000002528">
    <property type="component" value="Chromosome"/>
</dbReference>
<dbReference type="GO" id="GO:1990904">
    <property type="term" value="C:ribonucleoprotein complex"/>
    <property type="evidence" value="ECO:0007669"/>
    <property type="project" value="UniProtKB-KW"/>
</dbReference>
<dbReference type="GO" id="GO:0005840">
    <property type="term" value="C:ribosome"/>
    <property type="evidence" value="ECO:0007669"/>
    <property type="project" value="UniProtKB-KW"/>
</dbReference>
<dbReference type="GO" id="GO:0019843">
    <property type="term" value="F:rRNA binding"/>
    <property type="evidence" value="ECO:0007669"/>
    <property type="project" value="UniProtKB-UniRule"/>
</dbReference>
<dbReference type="GO" id="GO:0003735">
    <property type="term" value="F:structural constituent of ribosome"/>
    <property type="evidence" value="ECO:0007669"/>
    <property type="project" value="InterPro"/>
</dbReference>
<dbReference type="GO" id="GO:0000049">
    <property type="term" value="F:tRNA binding"/>
    <property type="evidence" value="ECO:0007669"/>
    <property type="project" value="UniProtKB-UniRule"/>
</dbReference>
<dbReference type="GO" id="GO:0006412">
    <property type="term" value="P:translation"/>
    <property type="evidence" value="ECO:0007669"/>
    <property type="project" value="UniProtKB-UniRule"/>
</dbReference>
<dbReference type="FunFam" id="3.30.1440.10:FF:000001">
    <property type="entry name" value="50S ribosomal protein L5"/>
    <property type="match status" value="1"/>
</dbReference>
<dbReference type="Gene3D" id="3.30.1440.10">
    <property type="match status" value="1"/>
</dbReference>
<dbReference type="HAMAP" id="MF_01333_B">
    <property type="entry name" value="Ribosomal_uL5_B"/>
    <property type="match status" value="1"/>
</dbReference>
<dbReference type="InterPro" id="IPR002132">
    <property type="entry name" value="Ribosomal_uL5"/>
</dbReference>
<dbReference type="InterPro" id="IPR020930">
    <property type="entry name" value="Ribosomal_uL5_bac-type"/>
</dbReference>
<dbReference type="InterPro" id="IPR031309">
    <property type="entry name" value="Ribosomal_uL5_C"/>
</dbReference>
<dbReference type="InterPro" id="IPR022803">
    <property type="entry name" value="Ribosomal_uL5_dom_sf"/>
</dbReference>
<dbReference type="InterPro" id="IPR031310">
    <property type="entry name" value="Ribosomal_uL5_N"/>
</dbReference>
<dbReference type="NCBIfam" id="NF000585">
    <property type="entry name" value="PRK00010.1"/>
    <property type="match status" value="1"/>
</dbReference>
<dbReference type="PANTHER" id="PTHR11994">
    <property type="entry name" value="60S RIBOSOMAL PROTEIN L11-RELATED"/>
    <property type="match status" value="1"/>
</dbReference>
<dbReference type="Pfam" id="PF00281">
    <property type="entry name" value="Ribosomal_L5"/>
    <property type="match status" value="1"/>
</dbReference>
<dbReference type="Pfam" id="PF00673">
    <property type="entry name" value="Ribosomal_L5_C"/>
    <property type="match status" value="1"/>
</dbReference>
<dbReference type="PIRSF" id="PIRSF002161">
    <property type="entry name" value="Ribosomal_L5"/>
    <property type="match status" value="1"/>
</dbReference>
<dbReference type="SUPFAM" id="SSF55282">
    <property type="entry name" value="RL5-like"/>
    <property type="match status" value="1"/>
</dbReference>
<evidence type="ECO:0000255" key="1">
    <source>
        <dbReference type="HAMAP-Rule" id="MF_01333"/>
    </source>
</evidence>
<evidence type="ECO:0000305" key="2"/>
<gene>
    <name evidence="1" type="primary">rplE</name>
    <name type="ordered locus">SAR11_1105</name>
</gene>
<name>RL5_PELUB</name>
<sequence length="184" mass="20931">MIPRLKELYYKEIQPQLKETLGYKNTYMGPKVEKVVINMGLGLDGADAKIMKSTEEDLGKITGQKPTVTKFKKSVANFKTRKGTNAGLKVTLRGNKMYEFLDRLVNIALPRIKDFRGLSPKGFDKFGNYTFGIKEHIIFPEVNFDRIDKIRGLDIVVVISALNKDHSFALLEKLNFPFIKKGDN</sequence>
<organism>
    <name type="scientific">Pelagibacter ubique (strain HTCC1062)</name>
    <dbReference type="NCBI Taxonomy" id="335992"/>
    <lineage>
        <taxon>Bacteria</taxon>
        <taxon>Pseudomonadati</taxon>
        <taxon>Pseudomonadota</taxon>
        <taxon>Alphaproteobacteria</taxon>
        <taxon>Candidatus Pelagibacterales</taxon>
        <taxon>Candidatus Pelagibacteraceae</taxon>
        <taxon>Candidatus Pelagibacter</taxon>
    </lineage>
</organism>
<accession>Q4FLN0</accession>
<keyword id="KW-1185">Reference proteome</keyword>
<keyword id="KW-0687">Ribonucleoprotein</keyword>
<keyword id="KW-0689">Ribosomal protein</keyword>
<keyword id="KW-0694">RNA-binding</keyword>
<keyword id="KW-0699">rRNA-binding</keyword>
<keyword id="KW-0820">tRNA-binding</keyword>
<comment type="function">
    <text evidence="1">This is one of the proteins that bind and probably mediate the attachment of the 5S RNA into the large ribosomal subunit, where it forms part of the central protuberance. In the 70S ribosome it contacts protein S13 of the 30S subunit (bridge B1b), connecting the 2 subunits; this bridge is implicated in subunit movement. Contacts the P site tRNA; the 5S rRNA and some of its associated proteins might help stabilize positioning of ribosome-bound tRNAs.</text>
</comment>
<comment type="subunit">
    <text evidence="1">Part of the 50S ribosomal subunit; part of the 5S rRNA/L5/L18/L25 subcomplex. Contacts the 5S rRNA and the P site tRNA. Forms a bridge to the 30S subunit in the 70S ribosome.</text>
</comment>
<comment type="similarity">
    <text evidence="1">Belongs to the universal ribosomal protein uL5 family.</text>
</comment>